<keyword id="KW-0009">Actin-binding</keyword>
<keyword id="KW-1003">Cell membrane</keyword>
<keyword id="KW-0175">Coiled coil</keyword>
<keyword id="KW-0963">Cytoplasm</keyword>
<keyword id="KW-0206">Cytoskeleton</keyword>
<keyword id="KW-0254">Endocytosis</keyword>
<keyword id="KW-0967">Endosome</keyword>
<keyword id="KW-0472">Membrane</keyword>
<keyword id="KW-1185">Reference proteome</keyword>
<keyword id="KW-0677">Repeat</keyword>
<protein>
    <recommendedName>
        <fullName>Actin cytoskeleton-regulatory complex protein pan1</fullName>
    </recommendedName>
</protein>
<name>PAN1_SCLS1</name>
<gene>
    <name type="primary">pan1</name>
    <name type="ORF">SS1G_05987</name>
</gene>
<dbReference type="EMBL" id="CH476627">
    <property type="protein sequence ID" value="EDO03506.1"/>
    <property type="molecule type" value="Genomic_DNA"/>
</dbReference>
<dbReference type="RefSeq" id="XP_001593065.1">
    <property type="nucleotide sequence ID" value="XM_001593015.1"/>
</dbReference>
<dbReference type="SMR" id="A7EKZ0"/>
<dbReference type="FunCoup" id="A7EKZ0">
    <property type="interactions" value="55"/>
</dbReference>
<dbReference type="STRING" id="665079.A7EKZ0"/>
<dbReference type="EnsemblFungi" id="EDO03506">
    <property type="protein sequence ID" value="EDO03506"/>
    <property type="gene ID" value="SS1G_05987"/>
</dbReference>
<dbReference type="GeneID" id="5489540"/>
<dbReference type="KEGG" id="ssl:SS1G_05987"/>
<dbReference type="eggNOG" id="KOG0998">
    <property type="taxonomic scope" value="Eukaryota"/>
</dbReference>
<dbReference type="HOGENOM" id="CLU_001963_1_0_1"/>
<dbReference type="InParanoid" id="A7EKZ0"/>
<dbReference type="OMA" id="GMPGQWG"/>
<dbReference type="Proteomes" id="UP000001312">
    <property type="component" value="Unassembled WGS sequence"/>
</dbReference>
<dbReference type="GO" id="GO:0030479">
    <property type="term" value="C:actin cortical patch"/>
    <property type="evidence" value="ECO:0007669"/>
    <property type="project" value="UniProtKB-SubCell"/>
</dbReference>
<dbReference type="GO" id="GO:0005737">
    <property type="term" value="C:cytoplasm"/>
    <property type="evidence" value="ECO:0000318"/>
    <property type="project" value="GO_Central"/>
</dbReference>
<dbReference type="GO" id="GO:0010008">
    <property type="term" value="C:endosome membrane"/>
    <property type="evidence" value="ECO:0007669"/>
    <property type="project" value="UniProtKB-SubCell"/>
</dbReference>
<dbReference type="GO" id="GO:0005886">
    <property type="term" value="C:plasma membrane"/>
    <property type="evidence" value="ECO:0000318"/>
    <property type="project" value="GO_Central"/>
</dbReference>
<dbReference type="GO" id="GO:0003779">
    <property type="term" value="F:actin binding"/>
    <property type="evidence" value="ECO:0007669"/>
    <property type="project" value="UniProtKB-KW"/>
</dbReference>
<dbReference type="GO" id="GO:0005509">
    <property type="term" value="F:calcium ion binding"/>
    <property type="evidence" value="ECO:0007669"/>
    <property type="project" value="InterPro"/>
</dbReference>
<dbReference type="GO" id="GO:0006897">
    <property type="term" value="P:endocytosis"/>
    <property type="evidence" value="ECO:0000318"/>
    <property type="project" value="GO_Central"/>
</dbReference>
<dbReference type="GO" id="GO:0016197">
    <property type="term" value="P:endosomal transport"/>
    <property type="evidence" value="ECO:0000318"/>
    <property type="project" value="GO_Central"/>
</dbReference>
<dbReference type="CDD" id="cd00052">
    <property type="entry name" value="EH"/>
    <property type="match status" value="2"/>
</dbReference>
<dbReference type="FunFam" id="1.10.238.10:FF:000349">
    <property type="entry name" value="Actin cytoskeleton-regulatory complex protein PAN1"/>
    <property type="match status" value="1"/>
</dbReference>
<dbReference type="Gene3D" id="1.10.238.10">
    <property type="entry name" value="EF-hand"/>
    <property type="match status" value="2"/>
</dbReference>
<dbReference type="InterPro" id="IPR013182">
    <property type="entry name" value="DUF1720"/>
</dbReference>
<dbReference type="InterPro" id="IPR011992">
    <property type="entry name" value="EF-hand-dom_pair"/>
</dbReference>
<dbReference type="InterPro" id="IPR002048">
    <property type="entry name" value="EF_hand_dom"/>
</dbReference>
<dbReference type="InterPro" id="IPR000261">
    <property type="entry name" value="EH_dom"/>
</dbReference>
<dbReference type="PANTHER" id="PTHR11216">
    <property type="entry name" value="EH DOMAIN"/>
    <property type="match status" value="1"/>
</dbReference>
<dbReference type="Pfam" id="PF08226">
    <property type="entry name" value="DUF1720"/>
    <property type="match status" value="3"/>
</dbReference>
<dbReference type="Pfam" id="PF12763">
    <property type="entry name" value="EH"/>
    <property type="match status" value="2"/>
</dbReference>
<dbReference type="SMART" id="SM00027">
    <property type="entry name" value="EH"/>
    <property type="match status" value="2"/>
</dbReference>
<dbReference type="SUPFAM" id="SSF47473">
    <property type="entry name" value="EF-hand"/>
    <property type="match status" value="2"/>
</dbReference>
<dbReference type="PROSITE" id="PS50222">
    <property type="entry name" value="EF_HAND_2"/>
    <property type="match status" value="2"/>
</dbReference>
<dbReference type="PROSITE" id="PS50031">
    <property type="entry name" value="EH"/>
    <property type="match status" value="2"/>
</dbReference>
<comment type="function">
    <text evidence="1">Component of the PAN1 actin cytoskeleton-regulatory complex required for the internalization of endosomes during actin-coupled endocytosis. The complex links the site of endocytosis to the cell membrane-associated actin cytoskeleton. Mediates uptake of external molecules and vacuolar degradation of plasma membrane proteins. Plays a role in the proper organization of the cell membrane-associated actin cytoskeleton and promotes its destabilization (By similarity).</text>
</comment>
<comment type="subunit">
    <text evidence="1">Component of the PAN1 actin cytoskeleton-regulatory complex.</text>
</comment>
<comment type="subcellular location">
    <subcellularLocation>
        <location evidence="1">Cell membrane</location>
        <topology evidence="1">Peripheral membrane protein</topology>
        <orientation evidence="1">Cytoplasmic side</orientation>
    </subcellularLocation>
    <subcellularLocation>
        <location evidence="1">Endosome membrane</location>
        <topology evidence="1">Peripheral membrane protein</topology>
        <orientation evidence="1">Cytoplasmic side</orientation>
    </subcellularLocation>
    <subcellularLocation>
        <location evidence="1">Cytoplasm</location>
        <location evidence="1">Cytoskeleton</location>
        <location evidence="1">Actin patch</location>
    </subcellularLocation>
    <text evidence="1">Cytoplasmic and cortical actin patches.</text>
</comment>
<comment type="similarity">
    <text evidence="6">Belongs to the PAN1 family.</text>
</comment>
<feature type="chain" id="PRO_0000349485" description="Actin cytoskeleton-regulatory complex protein pan1">
    <location>
        <begin position="1"/>
        <end position="1373"/>
    </location>
</feature>
<feature type="domain" description="EH 1" evidence="3">
    <location>
        <begin position="184"/>
        <end position="272"/>
    </location>
</feature>
<feature type="domain" description="EF-hand 1" evidence="4">
    <location>
        <begin position="216"/>
        <end position="251"/>
    </location>
</feature>
<feature type="domain" description="EH 2" evidence="3">
    <location>
        <begin position="471"/>
        <end position="560"/>
    </location>
</feature>
<feature type="domain" description="EF-hand 2" evidence="4">
    <location>
        <begin position="504"/>
        <end position="539"/>
    </location>
</feature>
<feature type="domain" description="WH2">
    <location>
        <begin position="1340"/>
        <end position="1357"/>
    </location>
</feature>
<feature type="region of interest" description="Disordered" evidence="5">
    <location>
        <begin position="1"/>
        <end position="170"/>
    </location>
</feature>
<feature type="region of interest" description="Disordered" evidence="5">
    <location>
        <begin position="283"/>
        <end position="309"/>
    </location>
</feature>
<feature type="region of interest" description="Disordered" evidence="5">
    <location>
        <begin position="339"/>
        <end position="359"/>
    </location>
</feature>
<feature type="region of interest" description="Disordered" evidence="5">
    <location>
        <begin position="764"/>
        <end position="812"/>
    </location>
</feature>
<feature type="region of interest" description="Disordered" evidence="5">
    <location>
        <begin position="828"/>
        <end position="882"/>
    </location>
</feature>
<feature type="region of interest" description="Disordered" evidence="5">
    <location>
        <begin position="903"/>
        <end position="1373"/>
    </location>
</feature>
<feature type="coiled-coil region" evidence="2">
    <location>
        <begin position="757"/>
        <end position="789"/>
    </location>
</feature>
<feature type="coiled-coil region" evidence="2">
    <location>
        <begin position="917"/>
        <end position="959"/>
    </location>
</feature>
<feature type="coiled-coil region" evidence="2">
    <location>
        <begin position="1001"/>
        <end position="1094"/>
    </location>
</feature>
<feature type="compositionally biased region" description="Low complexity" evidence="5">
    <location>
        <begin position="1"/>
        <end position="59"/>
    </location>
</feature>
<feature type="compositionally biased region" description="Low complexity" evidence="5">
    <location>
        <begin position="81"/>
        <end position="105"/>
    </location>
</feature>
<feature type="compositionally biased region" description="Low complexity" evidence="5">
    <location>
        <begin position="114"/>
        <end position="141"/>
    </location>
</feature>
<feature type="compositionally biased region" description="Polar residues" evidence="5">
    <location>
        <begin position="289"/>
        <end position="298"/>
    </location>
</feature>
<feature type="compositionally biased region" description="Low complexity" evidence="5">
    <location>
        <begin position="299"/>
        <end position="308"/>
    </location>
</feature>
<feature type="compositionally biased region" description="Low complexity" evidence="5">
    <location>
        <begin position="348"/>
        <end position="359"/>
    </location>
</feature>
<feature type="compositionally biased region" description="Basic and acidic residues" evidence="5">
    <location>
        <begin position="837"/>
        <end position="847"/>
    </location>
</feature>
<feature type="compositionally biased region" description="Low complexity" evidence="5">
    <location>
        <begin position="861"/>
        <end position="880"/>
    </location>
</feature>
<feature type="compositionally biased region" description="Basic and acidic residues" evidence="5">
    <location>
        <begin position="922"/>
        <end position="954"/>
    </location>
</feature>
<feature type="compositionally biased region" description="Basic and acidic residues" evidence="5">
    <location>
        <begin position="982"/>
        <end position="1001"/>
    </location>
</feature>
<feature type="compositionally biased region" description="Basic and acidic residues" evidence="5">
    <location>
        <begin position="1013"/>
        <end position="1050"/>
    </location>
</feature>
<feature type="compositionally biased region" description="Basic and acidic residues" evidence="5">
    <location>
        <begin position="1072"/>
        <end position="1086"/>
    </location>
</feature>
<feature type="compositionally biased region" description="Acidic residues" evidence="5">
    <location>
        <begin position="1090"/>
        <end position="1103"/>
    </location>
</feature>
<feature type="compositionally biased region" description="Polar residues" evidence="5">
    <location>
        <begin position="1106"/>
        <end position="1118"/>
    </location>
</feature>
<feature type="compositionally biased region" description="Low complexity" evidence="5">
    <location>
        <begin position="1135"/>
        <end position="1149"/>
    </location>
</feature>
<feature type="compositionally biased region" description="Low complexity" evidence="5">
    <location>
        <begin position="1156"/>
        <end position="1166"/>
    </location>
</feature>
<feature type="compositionally biased region" description="Polar residues" evidence="5">
    <location>
        <begin position="1182"/>
        <end position="1194"/>
    </location>
</feature>
<feature type="compositionally biased region" description="Acidic residues" evidence="5">
    <location>
        <begin position="1224"/>
        <end position="1244"/>
    </location>
</feature>
<feature type="compositionally biased region" description="Low complexity" evidence="5">
    <location>
        <begin position="1277"/>
        <end position="1287"/>
    </location>
</feature>
<feature type="compositionally biased region" description="Pro residues" evidence="5">
    <location>
        <begin position="1288"/>
        <end position="1335"/>
    </location>
</feature>
<organism>
    <name type="scientific">Sclerotinia sclerotiorum (strain ATCC 18683 / 1980 / Ss-1)</name>
    <name type="common">White mold</name>
    <name type="synonym">Whetzelinia sclerotiorum</name>
    <dbReference type="NCBI Taxonomy" id="665079"/>
    <lineage>
        <taxon>Eukaryota</taxon>
        <taxon>Fungi</taxon>
        <taxon>Dikarya</taxon>
        <taxon>Ascomycota</taxon>
        <taxon>Pezizomycotina</taxon>
        <taxon>Leotiomycetes</taxon>
        <taxon>Helotiales</taxon>
        <taxon>Sclerotiniaceae</taxon>
        <taxon>Sclerotinia</taxon>
    </lineage>
</organism>
<sequence length="1373" mass="148344">MFSGSNSYLGGNSGRQPPQQQPQQQQQYGGFQPNQGFQPQQTGFQPQQTGFQPQPTGYGNVAPLQPNFTGYPLQAQPTGYSQPPQSGFPGGQQQFNNAPQQQSFQTGAPPMPQIPQQFQQQPQQIQQAQPSPAAPVQQPQATGFAAMADSFKSASEPSKPRGRRASKGGAKIPSIRLSFITAQDQAKFETLFKSAVGDGQTLSGEKSRDLLLRSKLDGNSLSQIWTLADTTRSGQLHFPEFALAMYLCNLKLVGKSLPSVLPDQIKNEVSSMVDIINFAIEDDGPAGTNAPSFDSRQSTATPPTIQQPQPMPSNSALLTAQMTGFPGQQNNFSGGFQSQPTGFQSSMQTGFPGQQGGLQPQPTGFSQNMSNPQATGYTGPRPPMPPMPSNFSSNLSPAQTGMQGGMIAPLNSQPTGVPGQWGLVNAPATGLPNIDLLQSRMMPQQGREQGNFTTAGITGNAVIPWAVTKEEKTRYDSVFKAWDGFGKGFIGGDVAIEVFGQSGLEKPDLERIWTLSDHGNKGKLNMDEFAVAMHLIYRKLNGYPLPAQLPPELVPPSTRNFNDSIGAVKSLLHQESDFRKNSGATLLPQKTGLKKKVREKQVLLDAIDFKDENAADEDDALDRKDRREAEDLYRRIRRIQEDIDAHPDASLRNVDSGAERRAMKRQLQTLTDKLPDIASRVRRTERSIADAKLELFRLKDAKAHPGSASSIVGTGPGGAVTESDRLKARAKAMMQQRSAALTGKKIEISNDDLDAPKRLEEENLKIRTEKENNERMVQDVEESVRDFSRGLEDSLKDGGESSSSEHEKRRWEDGLGVEDEVKDFIFDLQRSSRSAKVRTDDRSREAPTETSRVSSAPAARSETPSSQPSSTPTPSAGTYSQYKTAEDRAAYIKQQAEQRMAERLAALGIRAPSKPGETTQQRLEREKNERAAKLKQAEEEDARREAERQARIAEEQGVAPHTPDQPKEITKKPPPPPSRKAARSDASERKFEEDRILKEQKSQIIATNELEDDAQRQENELAKEREAAQARVKALEEQMKAGKLKKEEEKKKRKALQAETKQQEARLAAQRAEIEAAQARERELQRQLEAIDDSDSSDDDEGPEQVTPQASTPTQGSQEFERKEASPPPPPPSVPVIVSPVPAAATTTSLPPPTPQVTSPVVSPPAETETRNPFLKKMAQSGDASAASTASNNPFHRLPSQELPAPAPIQVQPTGNRPSRVRPEEDDWDVVGSDKEDDSSDDEGPGAGGARHLASILFGTMGPPRPLSAMGNEATSAPHSPAAASPPVASPPPPPPMPSAGAPGGPPPPPPPPPPGMGAPPPPPMPPMGGAPAAPPAGGRPAGFLGEIQMGKALKKTQTKDKSAAATAGRVLD</sequence>
<evidence type="ECO:0000250" key="1"/>
<evidence type="ECO:0000255" key="2"/>
<evidence type="ECO:0000255" key="3">
    <source>
        <dbReference type="PROSITE-ProRule" id="PRU00077"/>
    </source>
</evidence>
<evidence type="ECO:0000255" key="4">
    <source>
        <dbReference type="PROSITE-ProRule" id="PRU00448"/>
    </source>
</evidence>
<evidence type="ECO:0000256" key="5">
    <source>
        <dbReference type="SAM" id="MobiDB-lite"/>
    </source>
</evidence>
<evidence type="ECO:0000305" key="6"/>
<reference key="1">
    <citation type="journal article" date="2011" name="PLoS Genet.">
        <title>Genomic analysis of the necrotrophic fungal pathogens Sclerotinia sclerotiorum and Botrytis cinerea.</title>
        <authorList>
            <person name="Amselem J."/>
            <person name="Cuomo C.A."/>
            <person name="van Kan J.A.L."/>
            <person name="Viaud M."/>
            <person name="Benito E.P."/>
            <person name="Couloux A."/>
            <person name="Coutinho P.M."/>
            <person name="de Vries R.P."/>
            <person name="Dyer P.S."/>
            <person name="Fillinger S."/>
            <person name="Fournier E."/>
            <person name="Gout L."/>
            <person name="Hahn M."/>
            <person name="Kohn L."/>
            <person name="Lapalu N."/>
            <person name="Plummer K.M."/>
            <person name="Pradier J.-M."/>
            <person name="Quevillon E."/>
            <person name="Sharon A."/>
            <person name="Simon A."/>
            <person name="ten Have A."/>
            <person name="Tudzynski B."/>
            <person name="Tudzynski P."/>
            <person name="Wincker P."/>
            <person name="Andrew M."/>
            <person name="Anthouard V."/>
            <person name="Beever R.E."/>
            <person name="Beffa R."/>
            <person name="Benoit I."/>
            <person name="Bouzid O."/>
            <person name="Brault B."/>
            <person name="Chen Z."/>
            <person name="Choquer M."/>
            <person name="Collemare J."/>
            <person name="Cotton P."/>
            <person name="Danchin E.G."/>
            <person name="Da Silva C."/>
            <person name="Gautier A."/>
            <person name="Giraud C."/>
            <person name="Giraud T."/>
            <person name="Gonzalez C."/>
            <person name="Grossetete S."/>
            <person name="Gueldener U."/>
            <person name="Henrissat B."/>
            <person name="Howlett B.J."/>
            <person name="Kodira C."/>
            <person name="Kretschmer M."/>
            <person name="Lappartient A."/>
            <person name="Leroch M."/>
            <person name="Levis C."/>
            <person name="Mauceli E."/>
            <person name="Neuveglise C."/>
            <person name="Oeser B."/>
            <person name="Pearson M."/>
            <person name="Poulain J."/>
            <person name="Poussereau N."/>
            <person name="Quesneville H."/>
            <person name="Rascle C."/>
            <person name="Schumacher J."/>
            <person name="Segurens B."/>
            <person name="Sexton A."/>
            <person name="Silva E."/>
            <person name="Sirven C."/>
            <person name="Soanes D.M."/>
            <person name="Talbot N.J."/>
            <person name="Templeton M."/>
            <person name="Yandava C."/>
            <person name="Yarden O."/>
            <person name="Zeng Q."/>
            <person name="Rollins J.A."/>
            <person name="Lebrun M.-H."/>
            <person name="Dickman M."/>
        </authorList>
    </citation>
    <scope>NUCLEOTIDE SEQUENCE [LARGE SCALE GENOMIC DNA]</scope>
    <source>
        <strain>ATCC 18683 / 1980 / Ss-1</strain>
    </source>
</reference>
<proteinExistence type="inferred from homology"/>
<accession>A7EKZ0</accession>